<reference key="1">
    <citation type="journal article" date="1995" name="Antimicrob. Agents Chemother.">
        <title>New mobile gene cassettes containing an aminoglycoside resistance gene, aacA7, and a chloramphenicol resistance gene, catB3, in an integron in pBWH301.</title>
        <authorList>
            <person name="Bunny K.L."/>
            <person name="Hall R.M."/>
            <person name="Stokes H.W."/>
        </authorList>
    </citation>
    <scope>NUCLEOTIDE SEQUENCE [GENOMIC DNA]</scope>
</reference>
<organism>
    <name type="scientific">Klebsiella aerogenes</name>
    <name type="common">Enterobacter aerogenes</name>
    <dbReference type="NCBI Taxonomy" id="548"/>
    <lineage>
        <taxon>Bacteria</taxon>
        <taxon>Pseudomonadati</taxon>
        <taxon>Pseudomonadota</taxon>
        <taxon>Gammaproteobacteria</taxon>
        <taxon>Enterobacterales</taxon>
        <taxon>Enterobacteriaceae</taxon>
        <taxon>Klebsiella/Raoultella group</taxon>
        <taxon>Klebsiella</taxon>
    </lineage>
</organism>
<sequence>MTNYFDSPFKGKLLSEQVKNPNIKVGRYSYYSGYYHGHSFDDCARYLFPDRDDVDKLIIGSFCSIGSGASFIMAGNQGHRYDWASSFPFFYMQEEPAFSSALDAFQKAGNTVIGNDVWIGSEAMVMPGIKIGHGAVIGSRSLVTKDVEPYAIVGGNPAKKIKKRFTDEEISLLLEMEWWNWSLEKIKAAMPMLCSSNIVGLHKYWLEFAV</sequence>
<gene>
    <name type="primary">catB4</name>
</gene>
<name>CAT4_KLEAE</name>
<feature type="chain" id="PRO_0000068659" description="Chloramphenicol acetyltransferase">
    <location>
        <begin position="1"/>
        <end position="210"/>
    </location>
</feature>
<feature type="active site" evidence="1">
    <location>
        <position position="79"/>
    </location>
</feature>
<proteinExistence type="inferred from homology"/>
<geneLocation type="plasmid">
    <name>pBWH301</name>
</geneLocation>
<evidence type="ECO:0000250" key="1"/>
<evidence type="ECO:0000305" key="2"/>
<comment type="function">
    <text>This enzyme is an effector of chloramphenicol resistance in bacteria.</text>
</comment>
<comment type="catalytic activity">
    <reaction>
        <text>chloramphenicol + acetyl-CoA = chloramphenicol 3-acetate + CoA</text>
        <dbReference type="Rhea" id="RHEA:18421"/>
        <dbReference type="ChEBI" id="CHEBI:16730"/>
        <dbReference type="ChEBI" id="CHEBI:17698"/>
        <dbReference type="ChEBI" id="CHEBI:57287"/>
        <dbReference type="ChEBI" id="CHEBI:57288"/>
        <dbReference type="EC" id="2.3.1.28"/>
    </reaction>
</comment>
<comment type="similarity">
    <text evidence="2">Belongs to the transferase hexapeptide repeat family.</text>
</comment>
<accession>P50868</accession>
<dbReference type="EC" id="2.3.1.28"/>
<dbReference type="EMBL" id="U13880">
    <property type="protein sequence ID" value="AAA90938.1"/>
    <property type="molecule type" value="Genomic_DNA"/>
</dbReference>
<dbReference type="SMR" id="P50868"/>
<dbReference type="CARD" id="ARO:3002676">
    <property type="molecule name" value="catB3"/>
    <property type="mechanism identifier" value="ARO:0001004"/>
    <property type="mechanism name" value="antibiotic inactivation"/>
</dbReference>
<dbReference type="GO" id="GO:0008811">
    <property type="term" value="F:chloramphenicol O-acetyltransferase activity"/>
    <property type="evidence" value="ECO:0007669"/>
    <property type="project" value="UniProtKB-EC"/>
</dbReference>
<dbReference type="GO" id="GO:0046677">
    <property type="term" value="P:response to antibiotic"/>
    <property type="evidence" value="ECO:0007669"/>
    <property type="project" value="UniProtKB-KW"/>
</dbReference>
<dbReference type="CDD" id="cd03349">
    <property type="entry name" value="LbH_XAT"/>
    <property type="match status" value="1"/>
</dbReference>
<dbReference type="Gene3D" id="2.160.10.10">
    <property type="entry name" value="Hexapeptide repeat proteins"/>
    <property type="match status" value="1"/>
</dbReference>
<dbReference type="InterPro" id="IPR001451">
    <property type="entry name" value="Hexapep"/>
</dbReference>
<dbReference type="InterPro" id="IPR018357">
    <property type="entry name" value="Hexapep_transf_CS"/>
</dbReference>
<dbReference type="InterPro" id="IPR050179">
    <property type="entry name" value="Trans_hexapeptide_repeat"/>
</dbReference>
<dbReference type="InterPro" id="IPR011004">
    <property type="entry name" value="Trimer_LpxA-like_sf"/>
</dbReference>
<dbReference type="NCBIfam" id="NF000490">
    <property type="entry name" value="chloram_CatB"/>
    <property type="match status" value="1"/>
</dbReference>
<dbReference type="PANTHER" id="PTHR43300">
    <property type="entry name" value="ACETYLTRANSFERASE"/>
    <property type="match status" value="1"/>
</dbReference>
<dbReference type="PANTHER" id="PTHR43300:SF12">
    <property type="entry name" value="CHLORAMPHENICOL ACETYLTRANSFERASE"/>
    <property type="match status" value="1"/>
</dbReference>
<dbReference type="Pfam" id="PF00132">
    <property type="entry name" value="Hexapep"/>
    <property type="match status" value="1"/>
</dbReference>
<dbReference type="SUPFAM" id="SSF51161">
    <property type="entry name" value="Trimeric LpxA-like enzymes"/>
    <property type="match status" value="1"/>
</dbReference>
<dbReference type="PROSITE" id="PS00101">
    <property type="entry name" value="HEXAPEP_TRANSFERASES"/>
    <property type="match status" value="1"/>
</dbReference>
<keyword id="KW-0012">Acyltransferase</keyword>
<keyword id="KW-0046">Antibiotic resistance</keyword>
<keyword id="KW-0614">Plasmid</keyword>
<keyword id="KW-0677">Repeat</keyword>
<keyword id="KW-0808">Transferase</keyword>
<protein>
    <recommendedName>
        <fullName>Chloramphenicol acetyltransferase</fullName>
        <ecNumber>2.3.1.28</ecNumber>
    </recommendedName>
</protein>